<sequence>MQKARGTRGEDAGTRAPPSPGVPPKRAKVGAGRGVLVTGAGAGAPVFLRPLKNAAVCAGSDVRLRVVVSGTPEPSLSWFRDGQLLPTPVPEPSCLWLRNCGAQDAGVYSCSAQNERGKASCEAVLTVLEVRDSETAEDDISDVPGTQRLELRDDRAFSTPTGGSDTLVGTSLDTPPTSVTGTSEEQVSWWGSGQTVLEQEAGSGGGTRPLPGSPRQAQTTGAGPRHLGVEPLVRASRANLVGASWGSEDSLSVASDLYGSAFSLYRGRALSIHVSIPPSGLRREEPDLQPQPASDALRPRPALPPPSKSALLPPPSPRVGKRALPGSSAQPPATPTSPHRCTQEPSLPEDITTTEEKRGKKPKSSGPSLAGTVESRPQTPLSEASGRLSALGRSPRLVRAGSRILDKLQFFEERRRSLERSDSPPAPLRPWVPLRKARSLEQPKSEGGAAWDTPGASQEELRSPRGSVAERRRLFQQKAASLDERTRQRSATSDLELRFAQELGRIRRSTSREELVRSHESLRATLQRAPSPREPGEPPLFSRPSIPKTSRAVSPAATQPPPPSGAGKSGDETGRPRSRGPVGRTEPGEGPQQEIKRRDQFPLTRSRAIQECRSPVPPFTADPPESRTKAPSARKREPPAQAVRFLPWATPGVEDSVLPQTLEKNRAGPEAEKRLRRGPEEDGPWGAWDRRGTRSQGKGRRARPTSPELESSDDSYVSAGEEPLEAPVFEIPLQNMVVAPGADVLLKCIITANPPPQVSWKKDGSVLHSEGRLLIRAEGERHTLLLREAQAADAGSYTATATNELGQASCASSLAVRPGASTSPFSSPITSDEEYLSPPEEFPEPGETWSRTPTMKPSPSQDRDSSDSSSKAPPTFKVSLMDQSVREGQDVIMSIRVQGEPKPVVSWLRNRQPVRPDQRRFAEEAEGGLCRLRILAAERGDAGFYTCKAVNEYGARQCEARLEVRAHPESRSLAVLAPLQDVDVGAGEMALFECLVAGPADVEVDWLCRGRLLQPALLKCKMHFDGRKCKLLLTSVHEDDSGVYTCKLSTVKDELTCSARLTVRPSLAPLFTRLLEDVEVLEGRAARLDCKISGTPPPSVTWTHFGHPVNESENLRLRQDGGLHSLHIARVGSEDEGLYEVSATNTHGQAHCSAQLYVEEPRTAASGPSSKLEKMPSIPEEPEHGDLERLSIPDFLRPLQDLEVGLAKEAMLECQVTGLPYPTISWFHNGHRIQSSDDRRMTQYRDIHRLVFPAVGPQHAGVYKSVIANKLGKAACYAHLYVTDVVPGPPDGAPQVVAVTGRMVTLSWNPPRSLDMAIDPDSLTYTVQHQVLGSDQWTALVTGLREPEWAATGLKKGLHHIFRVLSSSGKSSSKPSAPSEPVQLLEHGPPLEEAPAVLDKQDIVYVVEGQPACVTVTFNHVEAQVVWRSCRGALLEPRTGVYELSQPDDDQYCLRICRVSRRDLGPLTCSARNRHGTKACSITLELAEAPRFESIMEDVEVGPGETARFAVVVEGKPLPDIMWYKDEVLLAESNHVSFVYEENECSLVVLSAGSQDGGVYTCTARNLAGEVSCKAELSVHSAQTAMEVEGVGEDEEHRGRRLSDYYDIHQEIGRGAFSYLRRVVERSSGLEFAAKFIPSQAKPKASARREARLLARLQHDCVLYFHEAFERRRGLVIVTELCTEELLERMARKPTVCESETRTYMRQVLEGIGYLHQSHVLHLDVKPENLLVWDGAGGEEQVRICDFGNAQELTPGEPQYCQFGTPEFVAPEIVNQSPVSGVTDIWPVGVVAFLCLTGISPFVGENDRTTLMNIRNYNVAFEETTFLSLSREARGFLIKVLVQDRLRPTAEETLEHPWFKTEAKGAEVSTDHLKLFLSRRRWQRSQISYKCHLVLRPIPELLRAPPERVWVAMPRRQPPSGGLSSSSDSEEEELEELPSVPRPLQPEFSGSRVSLTDIPTEDEALGTPEAGAATPMDWQEQGRAPSKDQEAPSPEALPSPGQESPDGPSPRRPELRRGSSAESALPRVGSREPGRSLHKAASVELPQRRSPSPGATRLTRGGLGEGEYAQRLQALRQRLLRGGPEDGKVSGLRGPLLESLGGRARDPRMARAASSEAAPHHQPPPESRGLQKSSSFSQGEAEPRGRHRRAGAPLEIPVARLGARRLQESPSLSALSETQPPSPALPSAPKPSITKSPEPSAATSRDSPQPPAPQPVPEKIPEPKPEPVRAAKPAQPPLALQMPAQSLTPYAQIMQSLQLSSPTLSPQVPPSEPKPHAAVFARVASPPPGASEKRVPSARIPPVLAEKVRVPTVPPRPGSSLSGSIENLESEAVFEAKFKRSRESPLSRGLRLLSRSRSEERGPFRGAEDDGIYRPSPAGTPLELVRRPERSRSVQDLRVAGEPGLVRRLSLSLSQKLRRTPPGQRHPAWESRSGDGESSEGGSSARGSPVLAVRRRLSSTLERLSSRLQRSGSSEDSGGASGRSTPLFGRLRRATSEGESLRRLGVPHNQLASQTGATTPSAESLGSEASGTSGSSAPGESRSRHRWGLSRLRKDKGLSQPNLSASVQEDLGHQYVPSESDFPPVFHIKLKDQVLLEGEAATLLCLPAACPTPRISWMKDKQSLRSEPSVVIVSCKDGRQLLSIPRASKRHAGLYECSATNVLGSITSSCTVAVARTPGKLAPPEVPQTYCDTALVLWKPGDSRAPCTYTLERRVDGESVWHPVSSGIPDCYYNVTQLPVGVTVRFRVACSNRAGQGPFSNPSEKVFIRGTQDSPAQSAAAPRDAPVTSGPTRAPPPDSPTSLVPTPPLAPQVSQASTLSPSTSSMSANQALSSLKAVGPPPATPPRKHRGLLATQQAEPSPPSILVTPSEHKSFVPDTGTLTPTSSPQGVKPAPSSSSLYMVTSFVSAPPDPQPPAPEPPPEPTKVTVRSLSPAKEVVSSPTPESTTLRQGPPQKPYTFLEEKARGRFGVVRSCRENATGRTFVAKIVPYAAEGKRRVLQEYEVLRTLHHERLMSLHEAYITPRYLVLIAESCGNRELLCGLSDRFRYSEDDVATYVVQLLQGLDYLHGRHVLHLDIKPDNLLLAADNALKIVDFGSAQPYNPQALKPLGHRTGTLEFMAPEMVRGDPIGSATDIWGAGVLTYIMLSGYSPFYEPDPQETEARIVGGRFDAFQLYPNTSQSATLFLRKVLSVHPWSRPSLQDCLAHPWLQDAYLMKLRRQTLTFTTNRLKEFLGEQRRRRAEAATRHKVLLRSYPGSP</sequence>
<accession>Q63638</accession>
<organism>
    <name type="scientific">Rattus norvegicus</name>
    <name type="common">Rat</name>
    <dbReference type="NCBI Taxonomy" id="10116"/>
    <lineage>
        <taxon>Eukaryota</taxon>
        <taxon>Metazoa</taxon>
        <taxon>Chordata</taxon>
        <taxon>Craniata</taxon>
        <taxon>Vertebrata</taxon>
        <taxon>Euteleostomi</taxon>
        <taxon>Mammalia</taxon>
        <taxon>Eutheria</taxon>
        <taxon>Euarchontoglires</taxon>
        <taxon>Glires</taxon>
        <taxon>Rodentia</taxon>
        <taxon>Myomorpha</taxon>
        <taxon>Muroidea</taxon>
        <taxon>Muridae</taxon>
        <taxon>Murinae</taxon>
        <taxon>Rattus</taxon>
    </lineage>
</organism>
<dbReference type="EC" id="2.7.11.1"/>
<dbReference type="EMBL" id="AABR03067996">
    <property type="status" value="NOT_ANNOTATED_CDS"/>
    <property type="molecule type" value="Genomic_DNA"/>
</dbReference>
<dbReference type="EMBL" id="U57097">
    <property type="protein sequence ID" value="AAC52667.1"/>
    <property type="molecule type" value="mRNA"/>
</dbReference>
<dbReference type="RefSeq" id="NP_001102272.1">
    <molecule id="Q63638-1"/>
    <property type="nucleotide sequence ID" value="NM_001108802.2"/>
</dbReference>
<dbReference type="RefSeq" id="NP_037037.1">
    <molecule id="Q63638-2"/>
    <property type="nucleotide sequence ID" value="NM_012905.2"/>
</dbReference>
<dbReference type="SMR" id="Q63638"/>
<dbReference type="FunCoup" id="Q63638">
    <property type="interactions" value="486"/>
</dbReference>
<dbReference type="IntAct" id="Q63638">
    <property type="interactions" value="1"/>
</dbReference>
<dbReference type="STRING" id="10116.ENSRNOP00000026941"/>
<dbReference type="CarbonylDB" id="Q63638"/>
<dbReference type="GlyGen" id="Q63638">
    <property type="glycosylation" value="4 sites"/>
</dbReference>
<dbReference type="iPTMnet" id="Q63638"/>
<dbReference type="PhosphoSitePlus" id="Q63638"/>
<dbReference type="PaxDb" id="10116-ENSRNOP00000026941"/>
<dbReference type="Ensembl" id="ENSRNOT00000026941.8">
    <molecule id="Q63638-1"/>
    <property type="protein sequence ID" value="ENSRNOP00000026941.4"/>
    <property type="gene ID" value="ENSRNOG00000019850.9"/>
</dbReference>
<dbReference type="Ensembl" id="ENSRNOT00000098450.1">
    <molecule id="Q63638-2"/>
    <property type="protein sequence ID" value="ENSRNOP00000084140.1"/>
    <property type="gene ID" value="ENSRNOG00000019850.9"/>
</dbReference>
<dbReference type="GeneID" id="363256"/>
<dbReference type="KEGG" id="rno:363256"/>
<dbReference type="UCSC" id="RGD:2124">
    <molecule id="Q63638-1"/>
    <property type="organism name" value="rat"/>
</dbReference>
<dbReference type="AGR" id="RGD:2124"/>
<dbReference type="CTD" id="10290"/>
<dbReference type="RGD" id="2124">
    <property type="gene designation" value="Speg"/>
</dbReference>
<dbReference type="eggNOG" id="KOG0032">
    <property type="taxonomic scope" value="Eukaryota"/>
</dbReference>
<dbReference type="eggNOG" id="KOG0613">
    <property type="taxonomic scope" value="Eukaryota"/>
</dbReference>
<dbReference type="GeneTree" id="ENSGT00940000161126"/>
<dbReference type="HOGENOM" id="CLU_000381_0_0_1"/>
<dbReference type="InParanoid" id="Q63638"/>
<dbReference type="PhylomeDB" id="Q63638"/>
<dbReference type="TreeFam" id="TF331962"/>
<dbReference type="PRO" id="PR:Q63638"/>
<dbReference type="Proteomes" id="UP000002494">
    <property type="component" value="Chromosome 9"/>
</dbReference>
<dbReference type="Bgee" id="ENSRNOG00000019850">
    <property type="expression patterns" value="Expressed in skeletal muscle tissue and 20 other cell types or tissues"/>
</dbReference>
<dbReference type="GO" id="GO:0005634">
    <property type="term" value="C:nucleus"/>
    <property type="evidence" value="ECO:0007669"/>
    <property type="project" value="UniProtKB-SubCell"/>
</dbReference>
<dbReference type="GO" id="GO:0005524">
    <property type="term" value="F:ATP binding"/>
    <property type="evidence" value="ECO:0007669"/>
    <property type="project" value="UniProtKB-KW"/>
</dbReference>
<dbReference type="GO" id="GO:0004672">
    <property type="term" value="F:protein kinase activity"/>
    <property type="evidence" value="ECO:0000318"/>
    <property type="project" value="GO_Central"/>
</dbReference>
<dbReference type="GO" id="GO:0106310">
    <property type="term" value="F:protein serine kinase activity"/>
    <property type="evidence" value="ECO:0007669"/>
    <property type="project" value="RHEA"/>
</dbReference>
<dbReference type="GO" id="GO:0004674">
    <property type="term" value="F:protein serine/threonine kinase activity"/>
    <property type="evidence" value="ECO:0007669"/>
    <property type="project" value="UniProtKB-KW"/>
</dbReference>
<dbReference type="GO" id="GO:0055013">
    <property type="term" value="P:cardiac muscle cell development"/>
    <property type="evidence" value="ECO:0000266"/>
    <property type="project" value="RGD"/>
</dbReference>
<dbReference type="GO" id="GO:0072359">
    <property type="term" value="P:circulatory system development"/>
    <property type="evidence" value="ECO:0000266"/>
    <property type="project" value="RGD"/>
</dbReference>
<dbReference type="GO" id="GO:0001701">
    <property type="term" value="P:in utero embryonic development"/>
    <property type="evidence" value="ECO:0000266"/>
    <property type="project" value="RGD"/>
</dbReference>
<dbReference type="GO" id="GO:0042692">
    <property type="term" value="P:muscle cell differentiation"/>
    <property type="evidence" value="ECO:0000270"/>
    <property type="project" value="RGD"/>
</dbReference>
<dbReference type="GO" id="GO:0060541">
    <property type="term" value="P:respiratory system development"/>
    <property type="evidence" value="ECO:0000266"/>
    <property type="project" value="RGD"/>
</dbReference>
<dbReference type="CDD" id="cd00063">
    <property type="entry name" value="FN3"/>
    <property type="match status" value="2"/>
</dbReference>
<dbReference type="CDD" id="cd20975">
    <property type="entry name" value="IgI_APEG-1_like"/>
    <property type="match status" value="1"/>
</dbReference>
<dbReference type="CDD" id="cd14108">
    <property type="entry name" value="STKc_SPEG_rpt1"/>
    <property type="match status" value="1"/>
</dbReference>
<dbReference type="FunFam" id="2.60.40.10:FF:000080">
    <property type="entry name" value="Myosin light chain kinase, smooth muscle"/>
    <property type="match status" value="1"/>
</dbReference>
<dbReference type="FunFam" id="2.60.40.10:FF:000145">
    <property type="entry name" value="Myosin light chain kinase, smooth muscle"/>
    <property type="match status" value="1"/>
</dbReference>
<dbReference type="FunFam" id="1.10.510.10:FF:000363">
    <property type="entry name" value="Striated muscle preferentially expressed protein kinase"/>
    <property type="match status" value="1"/>
</dbReference>
<dbReference type="FunFam" id="2.60.40.10:FF:000497">
    <property type="entry name" value="Striated muscle preferentially expressed protein kinase"/>
    <property type="match status" value="1"/>
</dbReference>
<dbReference type="FunFam" id="2.60.40.10:FF:000538">
    <property type="entry name" value="Striated muscle preferentially expressed protein kinase"/>
    <property type="match status" value="1"/>
</dbReference>
<dbReference type="FunFam" id="2.60.40.10:FF:000784">
    <property type="entry name" value="Striated muscle preferentially expressed protein kinase"/>
    <property type="match status" value="1"/>
</dbReference>
<dbReference type="FunFam" id="2.60.40.10:FF:001056">
    <property type="entry name" value="Striated muscle preferentially expressed protein kinase"/>
    <property type="match status" value="1"/>
</dbReference>
<dbReference type="FunFam" id="2.60.40.10:FF:000428">
    <property type="entry name" value="striated muscle preferentially expressed protein kinase"/>
    <property type="match status" value="1"/>
</dbReference>
<dbReference type="FunFam" id="2.60.40.10:FF:000513">
    <property type="entry name" value="striated muscle preferentially expressed protein kinase"/>
    <property type="match status" value="1"/>
</dbReference>
<dbReference type="FunFam" id="2.60.40.10:FF:000539">
    <property type="entry name" value="striated muscle preferentially expressed protein kinase"/>
    <property type="match status" value="1"/>
</dbReference>
<dbReference type="FunFam" id="2.60.40.10:FF:000541">
    <property type="entry name" value="striated muscle preferentially expressed protein kinase"/>
    <property type="match status" value="1"/>
</dbReference>
<dbReference type="FunFam" id="2.60.40.10:FF:000601">
    <property type="entry name" value="striated muscle preferentially expressed protein kinase"/>
    <property type="match status" value="1"/>
</dbReference>
<dbReference type="FunFam" id="3.30.200.20:FF:000302">
    <property type="entry name" value="striated muscle preferentially expressed protein kinase"/>
    <property type="match status" value="1"/>
</dbReference>
<dbReference type="FunFam" id="3.30.200.20:FF:000312">
    <property type="entry name" value="striated muscle preferentially expressed protein kinase"/>
    <property type="match status" value="1"/>
</dbReference>
<dbReference type="FunFam" id="1.10.510.10:FF:000344">
    <property type="entry name" value="striated muscle preferentially expressed protein kinase isoform X1"/>
    <property type="match status" value="1"/>
</dbReference>
<dbReference type="Gene3D" id="2.60.40.10">
    <property type="entry name" value="Immunoglobulins"/>
    <property type="match status" value="11"/>
</dbReference>
<dbReference type="Gene3D" id="3.30.200.20">
    <property type="entry name" value="Phosphorylase Kinase, domain 1"/>
    <property type="match status" value="2"/>
</dbReference>
<dbReference type="Gene3D" id="1.10.510.10">
    <property type="entry name" value="Transferase(Phosphotransferase) domain 1"/>
    <property type="match status" value="2"/>
</dbReference>
<dbReference type="InterPro" id="IPR003961">
    <property type="entry name" value="FN3_dom"/>
</dbReference>
<dbReference type="InterPro" id="IPR036116">
    <property type="entry name" value="FN3_sf"/>
</dbReference>
<dbReference type="InterPro" id="IPR007110">
    <property type="entry name" value="Ig-like_dom"/>
</dbReference>
<dbReference type="InterPro" id="IPR036179">
    <property type="entry name" value="Ig-like_dom_sf"/>
</dbReference>
<dbReference type="InterPro" id="IPR013783">
    <property type="entry name" value="Ig-like_fold"/>
</dbReference>
<dbReference type="InterPro" id="IPR013098">
    <property type="entry name" value="Ig_I-set"/>
</dbReference>
<dbReference type="InterPro" id="IPR003599">
    <property type="entry name" value="Ig_sub"/>
</dbReference>
<dbReference type="InterPro" id="IPR003598">
    <property type="entry name" value="Ig_sub2"/>
</dbReference>
<dbReference type="InterPro" id="IPR011009">
    <property type="entry name" value="Kinase-like_dom_sf"/>
</dbReference>
<dbReference type="InterPro" id="IPR000719">
    <property type="entry name" value="Prot_kinase_dom"/>
</dbReference>
<dbReference type="InterPro" id="IPR017441">
    <property type="entry name" value="Protein_kinase_ATP_BS"/>
</dbReference>
<dbReference type="InterPro" id="IPR008271">
    <property type="entry name" value="Ser/Thr_kinase_AS"/>
</dbReference>
<dbReference type="PANTHER" id="PTHR47633">
    <property type="entry name" value="IMMUNOGLOBULIN"/>
    <property type="match status" value="1"/>
</dbReference>
<dbReference type="PANTHER" id="PTHR47633:SF3">
    <property type="entry name" value="STRIATED MUSCLE PREFERENTIALLY EXPRESSED PROTEIN KINASE"/>
    <property type="match status" value="1"/>
</dbReference>
<dbReference type="Pfam" id="PF07679">
    <property type="entry name" value="I-set"/>
    <property type="match status" value="8"/>
</dbReference>
<dbReference type="Pfam" id="PF00069">
    <property type="entry name" value="Pkinase"/>
    <property type="match status" value="2"/>
</dbReference>
<dbReference type="Pfam" id="PF16650">
    <property type="entry name" value="SPEG_u2"/>
    <property type="match status" value="1"/>
</dbReference>
<dbReference type="SMART" id="SM00060">
    <property type="entry name" value="FN3"/>
    <property type="match status" value="2"/>
</dbReference>
<dbReference type="SMART" id="SM00409">
    <property type="entry name" value="IG"/>
    <property type="match status" value="9"/>
</dbReference>
<dbReference type="SMART" id="SM00408">
    <property type="entry name" value="IGc2"/>
    <property type="match status" value="8"/>
</dbReference>
<dbReference type="SMART" id="SM00220">
    <property type="entry name" value="S_TKc"/>
    <property type="match status" value="2"/>
</dbReference>
<dbReference type="SUPFAM" id="SSF49265">
    <property type="entry name" value="Fibronectin type III"/>
    <property type="match status" value="1"/>
</dbReference>
<dbReference type="SUPFAM" id="SSF48726">
    <property type="entry name" value="Immunoglobulin"/>
    <property type="match status" value="9"/>
</dbReference>
<dbReference type="SUPFAM" id="SSF56112">
    <property type="entry name" value="Protein kinase-like (PK-like)"/>
    <property type="match status" value="2"/>
</dbReference>
<dbReference type="PROSITE" id="PS50853">
    <property type="entry name" value="FN3"/>
    <property type="match status" value="3"/>
</dbReference>
<dbReference type="PROSITE" id="PS50835">
    <property type="entry name" value="IG_LIKE"/>
    <property type="match status" value="8"/>
</dbReference>
<dbReference type="PROSITE" id="PS00107">
    <property type="entry name" value="PROTEIN_KINASE_ATP"/>
    <property type="match status" value="1"/>
</dbReference>
<dbReference type="PROSITE" id="PS50011">
    <property type="entry name" value="PROTEIN_KINASE_DOM"/>
    <property type="match status" value="2"/>
</dbReference>
<dbReference type="PROSITE" id="PS00108">
    <property type="entry name" value="PROTEIN_KINASE_ST"/>
    <property type="match status" value="2"/>
</dbReference>
<gene>
    <name type="primary">Speg</name>
    <name type="synonym">Apeg1</name>
</gene>
<feature type="chain" id="PRO_0000072668" description="Striated muscle-specific serine/threonine-protein kinase">
    <location>
        <begin position="1"/>
        <end position="3259"/>
    </location>
</feature>
<feature type="domain" description="Ig-like 1">
    <location>
        <begin position="45"/>
        <end position="126"/>
    </location>
</feature>
<feature type="domain" description="Ig-like 2">
    <location>
        <begin position="727"/>
        <end position="817"/>
    </location>
</feature>
<feature type="domain" description="Ig-like 3">
    <location>
        <begin position="874"/>
        <end position="963"/>
    </location>
</feature>
<feature type="domain" description="Ig-like 4">
    <location>
        <begin position="968"/>
        <end position="1056"/>
    </location>
</feature>
<feature type="domain" description="Ig-like 5">
    <location>
        <begin position="1069"/>
        <end position="1157"/>
    </location>
</feature>
<feature type="domain" description="Ig-like 6">
    <location>
        <begin position="1193"/>
        <end position="1283"/>
    </location>
</feature>
<feature type="domain" description="Fibronectin type-III 1" evidence="6">
    <location>
        <begin position="1290"/>
        <end position="1387"/>
    </location>
</feature>
<feature type="domain" description="Ig-like 7">
    <location>
        <begin position="1490"/>
        <end position="1578"/>
    </location>
</feature>
<feature type="domain" description="Protein kinase 1" evidence="5">
    <location>
        <begin position="1606"/>
        <end position="1859"/>
    </location>
</feature>
<feature type="domain" description="Ig-like 8">
    <location>
        <begin position="2583"/>
        <end position="2673"/>
    </location>
</feature>
<feature type="domain" description="Fibronectin type-III 2" evidence="6">
    <location>
        <begin position="2680"/>
        <end position="2774"/>
    </location>
</feature>
<feature type="domain" description="Fibronectin type-III 3" evidence="6">
    <location>
        <begin position="2859"/>
        <end position="2965"/>
    </location>
</feature>
<feature type="domain" description="Protein kinase 2" evidence="5">
    <location>
        <begin position="2958"/>
        <end position="3210"/>
    </location>
</feature>
<feature type="region of interest" description="Disordered" evidence="7">
    <location>
        <begin position="1"/>
        <end position="30"/>
    </location>
</feature>
<feature type="region of interest" description="Disordered" evidence="7">
    <location>
        <begin position="155"/>
        <end position="185"/>
    </location>
</feature>
<feature type="region of interest" description="Disordered" evidence="7">
    <location>
        <begin position="198"/>
        <end position="226"/>
    </location>
</feature>
<feature type="region of interest" description="Disordered" evidence="7">
    <location>
        <begin position="278"/>
        <end position="716"/>
    </location>
</feature>
<feature type="region of interest" description="Disordered" evidence="7">
    <location>
        <begin position="816"/>
        <end position="880"/>
    </location>
</feature>
<feature type="region of interest" description="Disordered" evidence="7">
    <location>
        <begin position="1162"/>
        <end position="1185"/>
    </location>
</feature>
<feature type="region of interest" description="Disordered" evidence="7">
    <location>
        <begin position="1367"/>
        <end position="1386"/>
    </location>
</feature>
<feature type="region of interest" description="Disordered" evidence="7">
    <location>
        <begin position="1913"/>
        <end position="2244"/>
    </location>
</feature>
<feature type="region of interest" description="Disordered" evidence="7">
    <location>
        <begin position="2336"/>
        <end position="2451"/>
    </location>
</feature>
<feature type="region of interest" description="Disordered" evidence="7">
    <location>
        <begin position="2463"/>
        <end position="2562"/>
    </location>
</feature>
<feature type="region of interest" description="Disordered" evidence="7">
    <location>
        <begin position="2771"/>
        <end position="2829"/>
    </location>
</feature>
<feature type="region of interest" description="Disordered" evidence="7">
    <location>
        <begin position="2855"/>
        <end position="2957"/>
    </location>
</feature>
<feature type="compositionally biased region" description="Polar residues" evidence="7">
    <location>
        <begin position="158"/>
        <end position="185"/>
    </location>
</feature>
<feature type="compositionally biased region" description="Pro residues" evidence="7">
    <location>
        <begin position="301"/>
        <end position="317"/>
    </location>
</feature>
<feature type="compositionally biased region" description="Basic and acidic residues" evidence="7">
    <location>
        <begin position="404"/>
        <end position="422"/>
    </location>
</feature>
<feature type="compositionally biased region" description="Basic and acidic residues" evidence="7">
    <location>
        <begin position="459"/>
        <end position="473"/>
    </location>
</feature>
<feature type="compositionally biased region" description="Basic and acidic residues" evidence="7">
    <location>
        <begin position="510"/>
        <end position="522"/>
    </location>
</feature>
<feature type="compositionally biased region" description="Basic and acidic residues" evidence="7">
    <location>
        <begin position="624"/>
        <end position="638"/>
    </location>
</feature>
<feature type="compositionally biased region" description="Basic and acidic residues" evidence="7">
    <location>
        <begin position="663"/>
        <end position="680"/>
    </location>
</feature>
<feature type="compositionally biased region" description="Polar residues" evidence="7">
    <location>
        <begin position="820"/>
        <end position="830"/>
    </location>
</feature>
<feature type="compositionally biased region" description="Low complexity" evidence="7">
    <location>
        <begin position="1367"/>
        <end position="1379"/>
    </location>
</feature>
<feature type="compositionally biased region" description="Low complexity" evidence="7">
    <location>
        <begin position="1918"/>
        <end position="1927"/>
    </location>
</feature>
<feature type="compositionally biased region" description="Basic and acidic residues" evidence="7">
    <location>
        <begin position="2009"/>
        <end position="2019"/>
    </location>
</feature>
<feature type="compositionally biased region" description="Low complexity" evidence="7">
    <location>
        <begin position="2069"/>
        <end position="2081"/>
    </location>
</feature>
<feature type="compositionally biased region" description="Polar residues" evidence="7">
    <location>
        <begin position="2168"/>
        <end position="2179"/>
    </location>
</feature>
<feature type="compositionally biased region" description="Pro residues" evidence="7">
    <location>
        <begin position="2180"/>
        <end position="2189"/>
    </location>
</feature>
<feature type="compositionally biased region" description="Polar residues" evidence="7">
    <location>
        <begin position="2193"/>
        <end position="2207"/>
    </location>
</feature>
<feature type="compositionally biased region" description="Pro residues" evidence="7">
    <location>
        <begin position="2208"/>
        <end position="2218"/>
    </location>
</feature>
<feature type="compositionally biased region" description="Basic and acidic residues" evidence="7">
    <location>
        <begin position="2219"/>
        <end position="2229"/>
    </location>
</feature>
<feature type="compositionally biased region" description="Low complexity" evidence="7">
    <location>
        <begin position="2230"/>
        <end position="2244"/>
    </location>
</feature>
<feature type="compositionally biased region" description="Basic and acidic residues" evidence="7">
    <location>
        <begin position="2336"/>
        <end position="2345"/>
    </location>
</feature>
<feature type="compositionally biased region" description="Low complexity" evidence="7">
    <location>
        <begin position="2346"/>
        <end position="2355"/>
    </location>
</feature>
<feature type="compositionally biased region" description="Basic and acidic residues" evidence="7">
    <location>
        <begin position="2356"/>
        <end position="2372"/>
    </location>
</feature>
<feature type="compositionally biased region" description="Basic and acidic residues" evidence="7">
    <location>
        <begin position="2384"/>
        <end position="2395"/>
    </location>
</feature>
<feature type="compositionally biased region" description="Low complexity" evidence="7">
    <location>
        <begin position="2463"/>
        <end position="2484"/>
    </location>
</feature>
<feature type="compositionally biased region" description="Polar residues" evidence="7">
    <location>
        <begin position="2510"/>
        <end position="2520"/>
    </location>
</feature>
<feature type="compositionally biased region" description="Low complexity" evidence="7">
    <location>
        <begin position="2521"/>
        <end position="2540"/>
    </location>
</feature>
<feature type="compositionally biased region" description="Basic residues" evidence="7">
    <location>
        <begin position="2543"/>
        <end position="2554"/>
    </location>
</feature>
<feature type="compositionally biased region" description="Pro residues" evidence="7">
    <location>
        <begin position="2793"/>
        <end position="2810"/>
    </location>
</feature>
<feature type="compositionally biased region" description="Low complexity" evidence="7">
    <location>
        <begin position="2814"/>
        <end position="2828"/>
    </location>
</feature>
<feature type="compositionally biased region" description="Polar residues" evidence="7">
    <location>
        <begin position="2880"/>
        <end position="2907"/>
    </location>
</feature>
<feature type="compositionally biased region" description="Pro residues" evidence="7">
    <location>
        <begin position="2910"/>
        <end position="2924"/>
    </location>
</feature>
<feature type="compositionally biased region" description="Polar residues" evidence="7">
    <location>
        <begin position="2940"/>
        <end position="2950"/>
    </location>
</feature>
<feature type="active site" description="Proton acceptor" evidence="1">
    <location>
        <position position="1724"/>
    </location>
</feature>
<feature type="active site" description="Proton acceptor" evidence="1">
    <location>
        <position position="3077"/>
    </location>
</feature>
<feature type="binding site" evidence="5">
    <location>
        <begin position="1612"/>
        <end position="1620"/>
    </location>
    <ligand>
        <name>ATP</name>
        <dbReference type="ChEBI" id="CHEBI:30616"/>
    </ligand>
</feature>
<feature type="binding site" evidence="5">
    <location>
        <position position="1635"/>
    </location>
    <ligand>
        <name>ATP</name>
        <dbReference type="ChEBI" id="CHEBI:30616"/>
    </ligand>
</feature>
<feature type="binding site" evidence="5">
    <location>
        <begin position="2964"/>
        <end position="2972"/>
    </location>
    <ligand>
        <name>ATP</name>
        <dbReference type="ChEBI" id="CHEBI:30616"/>
    </ligand>
</feature>
<feature type="binding site" evidence="5">
    <location>
        <position position="2987"/>
    </location>
    <ligand>
        <name>ATP</name>
        <dbReference type="ChEBI" id="CHEBI:30616"/>
    </ligand>
</feature>
<feature type="modified residue" description="Omega-N-methylarginine" evidence="3">
    <location>
        <position position="33"/>
    </location>
</feature>
<feature type="modified residue" description="Phosphoserine" evidence="10">
    <location>
        <position position="141"/>
    </location>
</feature>
<feature type="modified residue" description="Phosphoserine" evidence="10">
    <location>
        <position position="368"/>
    </location>
</feature>
<feature type="modified residue" description="Phosphoserine" evidence="10">
    <location>
        <position position="375"/>
    </location>
</feature>
<feature type="modified residue" description="Phosphothreonine" evidence="10">
    <location>
        <position position="379"/>
    </location>
</feature>
<feature type="modified residue" description="Phosphoserine" evidence="3">
    <location>
        <position position="382"/>
    </location>
</feature>
<feature type="modified residue" description="Phosphoserine" evidence="10">
    <location>
        <position position="385"/>
    </location>
</feature>
<feature type="modified residue" description="Phosphoserine" evidence="10">
    <location>
        <position position="423"/>
    </location>
</feature>
<feature type="modified residue" description="Phosphothreonine" evidence="10">
    <location>
        <position position="453"/>
    </location>
</feature>
<feature type="modified residue" description="Phosphoserine" evidence="10">
    <location>
        <position position="457"/>
    </location>
</feature>
<feature type="modified residue" description="Phosphoserine" evidence="10">
    <location>
        <position position="463"/>
    </location>
</feature>
<feature type="modified residue" description="Phosphoserine" evidence="10">
    <location>
        <position position="493"/>
    </location>
</feature>
<feature type="modified residue" description="Phosphoserine" evidence="10">
    <location>
        <position position="511"/>
    </location>
</feature>
<feature type="modified residue" description="Phosphoserine" evidence="3">
    <location>
        <position position="531"/>
    </location>
</feature>
<feature type="modified residue" description="Phosphoserine" evidence="10">
    <location>
        <position position="554"/>
    </location>
</feature>
<feature type="modified residue" description="Phosphoserine" evidence="3">
    <location>
        <position position="1133"/>
    </location>
</feature>
<feature type="modified residue" description="Phosphoserine" evidence="10">
    <location>
        <position position="1177"/>
    </location>
</feature>
<feature type="modified residue" description="Phosphoserine" evidence="3">
    <location>
        <position position="1993"/>
    </location>
</feature>
<feature type="modified residue" description="Phosphoserine" evidence="10">
    <location>
        <position position="2004"/>
    </location>
</feature>
<feature type="modified residue" description="Phosphoserine" evidence="10">
    <location>
        <position position="2019"/>
    </location>
</feature>
<feature type="modified residue" description="Phosphoserine" evidence="10">
    <location>
        <position position="2020"/>
    </location>
</feature>
<feature type="modified residue" description="Phosphoserine" evidence="10">
    <location>
        <position position="2042"/>
    </location>
</feature>
<feature type="modified residue" description="Asymmetric dimethylarginine; alternate" evidence="3">
    <location>
        <position position="2060"/>
    </location>
</feature>
<feature type="modified residue" description="Omega-N-methylarginine; alternate" evidence="3">
    <location>
        <position position="2060"/>
    </location>
</feature>
<feature type="modified residue" description="Phosphoserine" evidence="10">
    <location>
        <position position="2114"/>
    </location>
</feature>
<feature type="modified residue" description="Phosphoserine" evidence="10">
    <location>
        <position position="2135"/>
    </location>
</feature>
<feature type="modified residue" description="Omega-N-methylarginine" evidence="3">
    <location>
        <position position="2144"/>
    </location>
</feature>
<feature type="modified residue" description="Phosphoserine" evidence="10">
    <location>
        <position position="2182"/>
    </location>
</feature>
<feature type="modified residue" description="Phosphoserine" evidence="10">
    <location>
        <position position="2207"/>
    </location>
</feature>
<feature type="modified residue" description="Phosphoserine" evidence="3">
    <location>
        <position position="2376"/>
    </location>
</feature>
<feature type="modified residue" description="Phosphothreonine" evidence="3">
    <location>
        <position position="2380"/>
    </location>
</feature>
<feature type="modified residue" description="Phosphoserine" evidence="10">
    <location>
        <position position="2410"/>
    </location>
</feature>
<feature type="modified residue" description="Phosphoserine" evidence="10">
    <location>
        <position position="2414"/>
    </location>
</feature>
<feature type="modified residue" description="Phosphoserine" evidence="10">
    <location>
        <position position="2438"/>
    </location>
</feature>
<feature type="modified residue" description="Phosphoserine" evidence="10">
    <location>
        <position position="2439"/>
    </location>
</feature>
<feature type="modified residue" description="Phosphoserine" evidence="3">
    <location>
        <position position="2444"/>
    </location>
</feature>
<feature type="modified residue" description="Phosphoserine" evidence="10">
    <location>
        <position position="2448"/>
    </location>
</feature>
<feature type="modified residue" description="Phosphoserine" evidence="3">
    <location>
        <position position="2521"/>
    </location>
</feature>
<feature type="modified residue" description="Phosphoserine" evidence="3">
    <location>
        <position position="2524"/>
    </location>
</feature>
<feature type="modified residue" description="Phosphoserine" evidence="10">
    <location>
        <position position="2559"/>
    </location>
</feature>
<feature type="modified residue" description="Phosphothreonine" evidence="3">
    <location>
        <position position="2771"/>
    </location>
</feature>
<feature type="modified residue" description="Phosphoserine" evidence="10">
    <location>
        <position position="2774"/>
    </location>
</feature>
<feature type="modified residue" description="Phosphoserine" evidence="3">
    <location>
        <position position="2941"/>
    </location>
</feature>
<feature type="disulfide bond" evidence="4">
    <location>
        <begin position="994"/>
        <end position="1046"/>
    </location>
</feature>
<feature type="disulfide bond" evidence="4">
    <location>
        <begin position="2605"/>
        <end position="2657"/>
    </location>
</feature>
<feature type="splice variant" id="VSP_018269" description="In isoform 2." evidence="8">
    <location>
        <begin position="1"/>
        <end position="854"/>
    </location>
</feature>
<feature type="splice variant" id="VSP_018270" description="In isoform 2." evidence="8">
    <original>AH</original>
    <variation>GE</variation>
    <location>
        <begin position="966"/>
        <end position="967"/>
    </location>
</feature>
<feature type="splice variant" id="VSP_018271" description="In isoform 2." evidence="8">
    <location>
        <begin position="968"/>
        <end position="3259"/>
    </location>
</feature>
<reference key="1">
    <citation type="journal article" date="2004" name="Nature">
        <title>Genome sequence of the Brown Norway rat yields insights into mammalian evolution.</title>
        <authorList>
            <person name="Gibbs R.A."/>
            <person name="Weinstock G.M."/>
            <person name="Metzker M.L."/>
            <person name="Muzny D.M."/>
            <person name="Sodergren E.J."/>
            <person name="Scherer S."/>
            <person name="Scott G."/>
            <person name="Steffen D."/>
            <person name="Worley K.C."/>
            <person name="Burch P.E."/>
            <person name="Okwuonu G."/>
            <person name="Hines S."/>
            <person name="Lewis L."/>
            <person name="Deramo C."/>
            <person name="Delgado O."/>
            <person name="Dugan-Rocha S."/>
            <person name="Miner G."/>
            <person name="Morgan M."/>
            <person name="Hawes A."/>
            <person name="Gill R."/>
            <person name="Holt R.A."/>
            <person name="Adams M.D."/>
            <person name="Amanatides P.G."/>
            <person name="Baden-Tillson H."/>
            <person name="Barnstead M."/>
            <person name="Chin S."/>
            <person name="Evans C.A."/>
            <person name="Ferriera S."/>
            <person name="Fosler C."/>
            <person name="Glodek A."/>
            <person name="Gu Z."/>
            <person name="Jennings D."/>
            <person name="Kraft C.L."/>
            <person name="Nguyen T."/>
            <person name="Pfannkoch C.M."/>
            <person name="Sitter C."/>
            <person name="Sutton G.G."/>
            <person name="Venter J.C."/>
            <person name="Woodage T."/>
            <person name="Smith D."/>
            <person name="Lee H.-M."/>
            <person name="Gustafson E."/>
            <person name="Cahill P."/>
            <person name="Kana A."/>
            <person name="Doucette-Stamm L."/>
            <person name="Weinstock K."/>
            <person name="Fechtel K."/>
            <person name="Weiss R.B."/>
            <person name="Dunn D.M."/>
            <person name="Green E.D."/>
            <person name="Blakesley R.W."/>
            <person name="Bouffard G.G."/>
            <person name="De Jong P.J."/>
            <person name="Osoegawa K."/>
            <person name="Zhu B."/>
            <person name="Marra M."/>
            <person name="Schein J."/>
            <person name="Bosdet I."/>
            <person name="Fjell C."/>
            <person name="Jones S."/>
            <person name="Krzywinski M."/>
            <person name="Mathewson C."/>
            <person name="Siddiqui A."/>
            <person name="Wye N."/>
            <person name="McPherson J."/>
            <person name="Zhao S."/>
            <person name="Fraser C.M."/>
            <person name="Shetty J."/>
            <person name="Shatsman S."/>
            <person name="Geer K."/>
            <person name="Chen Y."/>
            <person name="Abramzon S."/>
            <person name="Nierman W.C."/>
            <person name="Havlak P.H."/>
            <person name="Chen R."/>
            <person name="Durbin K.J."/>
            <person name="Egan A."/>
            <person name="Ren Y."/>
            <person name="Song X.-Z."/>
            <person name="Li B."/>
            <person name="Liu Y."/>
            <person name="Qin X."/>
            <person name="Cawley S."/>
            <person name="Cooney A.J."/>
            <person name="D'Souza L.M."/>
            <person name="Martin K."/>
            <person name="Wu J.Q."/>
            <person name="Gonzalez-Garay M.L."/>
            <person name="Jackson A.R."/>
            <person name="Kalafus K.J."/>
            <person name="McLeod M.P."/>
            <person name="Milosavljevic A."/>
            <person name="Virk D."/>
            <person name="Volkov A."/>
            <person name="Wheeler D.A."/>
            <person name="Zhang Z."/>
            <person name="Bailey J.A."/>
            <person name="Eichler E.E."/>
            <person name="Tuzun E."/>
            <person name="Birney E."/>
            <person name="Mongin E."/>
            <person name="Ureta-Vidal A."/>
            <person name="Woodwark C."/>
            <person name="Zdobnov E."/>
            <person name="Bork P."/>
            <person name="Suyama M."/>
            <person name="Torrents D."/>
            <person name="Alexandersson M."/>
            <person name="Trask B.J."/>
            <person name="Young J.M."/>
            <person name="Huang H."/>
            <person name="Wang H."/>
            <person name="Xing H."/>
            <person name="Daniels S."/>
            <person name="Gietzen D."/>
            <person name="Schmidt J."/>
            <person name="Stevens K."/>
            <person name="Vitt U."/>
            <person name="Wingrove J."/>
            <person name="Camara F."/>
            <person name="Mar Alba M."/>
            <person name="Abril J.F."/>
            <person name="Guigo R."/>
            <person name="Smit A."/>
            <person name="Dubchak I."/>
            <person name="Rubin E.M."/>
            <person name="Couronne O."/>
            <person name="Poliakov A."/>
            <person name="Huebner N."/>
            <person name="Ganten D."/>
            <person name="Goesele C."/>
            <person name="Hummel O."/>
            <person name="Kreitler T."/>
            <person name="Lee Y.-A."/>
            <person name="Monti J."/>
            <person name="Schulz H."/>
            <person name="Zimdahl H."/>
            <person name="Himmelbauer H."/>
            <person name="Lehrach H."/>
            <person name="Jacob H.J."/>
            <person name="Bromberg S."/>
            <person name="Gullings-Handley J."/>
            <person name="Jensen-Seaman M.I."/>
            <person name="Kwitek A.E."/>
            <person name="Lazar J."/>
            <person name="Pasko D."/>
            <person name="Tonellato P.J."/>
            <person name="Twigger S."/>
            <person name="Ponting C.P."/>
            <person name="Duarte J.M."/>
            <person name="Rice S."/>
            <person name="Goodstadt L."/>
            <person name="Beatson S.A."/>
            <person name="Emes R.D."/>
            <person name="Winter E.E."/>
            <person name="Webber C."/>
            <person name="Brandt P."/>
            <person name="Nyakatura G."/>
            <person name="Adetobi M."/>
            <person name="Chiaromonte F."/>
            <person name="Elnitski L."/>
            <person name="Eswara P."/>
            <person name="Hardison R.C."/>
            <person name="Hou M."/>
            <person name="Kolbe D."/>
            <person name="Makova K."/>
            <person name="Miller W."/>
            <person name="Nekrutenko A."/>
            <person name="Riemer C."/>
            <person name="Schwartz S."/>
            <person name="Taylor J."/>
            <person name="Yang S."/>
            <person name="Zhang Y."/>
            <person name="Lindpaintner K."/>
            <person name="Andrews T.D."/>
            <person name="Caccamo M."/>
            <person name="Clamp M."/>
            <person name="Clarke L."/>
            <person name="Curwen V."/>
            <person name="Durbin R.M."/>
            <person name="Eyras E."/>
            <person name="Searle S.M."/>
            <person name="Cooper G.M."/>
            <person name="Batzoglou S."/>
            <person name="Brudno M."/>
            <person name="Sidow A."/>
            <person name="Stone E.A."/>
            <person name="Payseur B.A."/>
            <person name="Bourque G."/>
            <person name="Lopez-Otin C."/>
            <person name="Puente X.S."/>
            <person name="Chakrabarti K."/>
            <person name="Chatterji S."/>
            <person name="Dewey C."/>
            <person name="Pachter L."/>
            <person name="Bray N."/>
            <person name="Yap V.B."/>
            <person name="Caspi A."/>
            <person name="Tesler G."/>
            <person name="Pevzner P.A."/>
            <person name="Haussler D."/>
            <person name="Roskin K.M."/>
            <person name="Baertsch R."/>
            <person name="Clawson H."/>
            <person name="Furey T.S."/>
            <person name="Hinrichs A.S."/>
            <person name="Karolchik D."/>
            <person name="Kent W.J."/>
            <person name="Rosenbloom K.R."/>
            <person name="Trumbower H."/>
            <person name="Weirauch M."/>
            <person name="Cooper D.N."/>
            <person name="Stenson P.D."/>
            <person name="Ma B."/>
            <person name="Brent M."/>
            <person name="Arumugam M."/>
            <person name="Shteynberg D."/>
            <person name="Copley R.R."/>
            <person name="Taylor M.S."/>
            <person name="Riethman H."/>
            <person name="Mudunuri U."/>
            <person name="Peterson J."/>
            <person name="Guyer M."/>
            <person name="Felsenfeld A."/>
            <person name="Old S."/>
            <person name="Mockrin S."/>
            <person name="Collins F.S."/>
        </authorList>
    </citation>
    <scope>NUCLEOTIDE SEQUENCE [LARGE SCALE GENOMIC DNA]</scope>
    <source>
        <strain>Brown Norway</strain>
    </source>
</reference>
<reference key="2">
    <citation type="journal article" date="1996" name="J. Biol. Chem.">
        <title>APEG-1, a novel gene preferentially expressed in aortic smooth muscle cells, is down-regulated by vascular injury.</title>
        <authorList>
            <person name="Hsieh C.-M."/>
            <person name="Yoshizumi M."/>
            <person name="Endege W.O."/>
            <person name="Kho C.-J."/>
            <person name="Jain M.K."/>
            <person name="Kashiki S."/>
            <person name="de Los Santos R."/>
            <person name="Lee W.-S."/>
            <person name="Perrella M.A."/>
            <person name="Lee M.-E."/>
        </authorList>
    </citation>
    <scope>NUCLEOTIDE SEQUENCE [MRNA] (ISOFORM 2)</scope>
    <source>
        <strain>Sprague-Dawley</strain>
    </source>
</reference>
<reference key="3">
    <citation type="journal article" date="2012" name="Nat. Commun.">
        <title>Quantitative maps of protein phosphorylation sites across 14 different rat organs and tissues.</title>
        <authorList>
            <person name="Lundby A."/>
            <person name="Secher A."/>
            <person name="Lage K."/>
            <person name="Nordsborg N.B."/>
            <person name="Dmytriyev A."/>
            <person name="Lundby C."/>
            <person name="Olsen J.V."/>
        </authorList>
    </citation>
    <scope>PHOSPHORYLATION [LARGE SCALE ANALYSIS] AT SER-141; SER-368; SER-375; THR-379; SER-385; SER-423; THR-453; SER-457; SER-463; SER-493; SER-511; SER-554; SER-1177; SER-2004; SER-2019; SER-2020; SER-2042; SER-2114; SER-2135; SER-2182; SER-2207; SER-2410; SER-2414; SER-2438; SER-2439; SER-2448; SER-2559 AND SER-2774</scope>
    <scope>IDENTIFICATION BY MASS SPECTROMETRY [LARGE SCALE ANALYSIS]</scope>
</reference>
<keyword id="KW-0877">Alternative promoter usage</keyword>
<keyword id="KW-0025">Alternative splicing</keyword>
<keyword id="KW-0067">ATP-binding</keyword>
<keyword id="KW-0221">Differentiation</keyword>
<keyword id="KW-1015">Disulfide bond</keyword>
<keyword id="KW-0393">Immunoglobulin domain</keyword>
<keyword id="KW-0418">Kinase</keyword>
<keyword id="KW-0488">Methylation</keyword>
<keyword id="KW-0547">Nucleotide-binding</keyword>
<keyword id="KW-0539">Nucleus</keyword>
<keyword id="KW-0597">Phosphoprotein</keyword>
<keyword id="KW-1185">Reference proteome</keyword>
<keyword id="KW-0677">Repeat</keyword>
<keyword id="KW-0723">Serine/threonine-protein kinase</keyword>
<keyword id="KW-0808">Transferase</keyword>
<proteinExistence type="evidence at protein level"/>
<comment type="function">
    <text>Isoform 2 may have a role in regulating the growth and differentiation of arterial smooth muscle cells.</text>
</comment>
<comment type="catalytic activity">
    <reaction>
        <text>L-seryl-[protein] + ATP = O-phospho-L-seryl-[protein] + ADP + H(+)</text>
        <dbReference type="Rhea" id="RHEA:17989"/>
        <dbReference type="Rhea" id="RHEA-COMP:9863"/>
        <dbReference type="Rhea" id="RHEA-COMP:11604"/>
        <dbReference type="ChEBI" id="CHEBI:15378"/>
        <dbReference type="ChEBI" id="CHEBI:29999"/>
        <dbReference type="ChEBI" id="CHEBI:30616"/>
        <dbReference type="ChEBI" id="CHEBI:83421"/>
        <dbReference type="ChEBI" id="CHEBI:456216"/>
        <dbReference type="EC" id="2.7.11.1"/>
    </reaction>
</comment>
<comment type="catalytic activity">
    <reaction>
        <text>L-threonyl-[protein] + ATP = O-phospho-L-threonyl-[protein] + ADP + H(+)</text>
        <dbReference type="Rhea" id="RHEA:46608"/>
        <dbReference type="Rhea" id="RHEA-COMP:11060"/>
        <dbReference type="Rhea" id="RHEA-COMP:11605"/>
        <dbReference type="ChEBI" id="CHEBI:15378"/>
        <dbReference type="ChEBI" id="CHEBI:30013"/>
        <dbReference type="ChEBI" id="CHEBI:30616"/>
        <dbReference type="ChEBI" id="CHEBI:61977"/>
        <dbReference type="ChEBI" id="CHEBI:456216"/>
        <dbReference type="EC" id="2.7.11.1"/>
    </reaction>
</comment>
<comment type="subunit">
    <text evidence="2">Interacts with MTM1 (By similarity).</text>
</comment>
<comment type="subcellular location">
    <molecule>Isoform 2</molecule>
    <subcellularLocation>
        <location>Nucleus</location>
    </subcellularLocation>
</comment>
<comment type="alternative products">
    <event type="alternative promoter"/>
    <event type="alternative splicing"/>
    <isoform>
        <id>Q63638-1</id>
        <name>1</name>
        <name>SPEG</name>
        <sequence type="displayed"/>
    </isoform>
    <isoform>
        <id>Q63638-2</id>
        <name>2</name>
        <name>APEG1</name>
        <sequence type="described" ref="VSP_018269 VSP_018270 VSP_018271"/>
    </isoform>
</comment>
<comment type="tissue specificity">
    <text>Isoform 2 is highly expressed in differentiated arterial smooth muscle cells (ASMC) in the medial layer of the aorta. Weakly detected in brain and testis and to a lesser extent in organs rich in striated muscle or visceral smooth muscle.</text>
</comment>
<comment type="PTM">
    <text>May be autophosphorylated.</text>
</comment>
<comment type="miscellaneous">
    <text>Expression is under the tight control of the locus control region (LCRs).</text>
</comment>
<comment type="miscellaneous">
    <molecule>Isoform 2</molecule>
    <text evidence="9">Produced by alternative promoter usage.</text>
</comment>
<comment type="similarity">
    <text evidence="9">Belongs to the protein kinase superfamily. CAMK Ser/Thr protein kinase family.</text>
</comment>
<protein>
    <recommendedName>
        <fullName>Striated muscle-specific serine/threonine-protein kinase</fullName>
        <ecNumber>2.7.11.1</ecNumber>
    </recommendedName>
    <alternativeName>
        <fullName>Aortic preferentially expressed protein 1</fullName>
        <shortName>APEG-1</shortName>
    </alternativeName>
</protein>
<name>SPEG_RAT</name>
<evidence type="ECO:0000250" key="1"/>
<evidence type="ECO:0000250" key="2">
    <source>
        <dbReference type="UniProtKB" id="Q15772"/>
    </source>
</evidence>
<evidence type="ECO:0000250" key="3">
    <source>
        <dbReference type="UniProtKB" id="Q62407"/>
    </source>
</evidence>
<evidence type="ECO:0000255" key="4">
    <source>
        <dbReference type="PROSITE-ProRule" id="PRU00114"/>
    </source>
</evidence>
<evidence type="ECO:0000255" key="5">
    <source>
        <dbReference type="PROSITE-ProRule" id="PRU00159"/>
    </source>
</evidence>
<evidence type="ECO:0000255" key="6">
    <source>
        <dbReference type="PROSITE-ProRule" id="PRU00316"/>
    </source>
</evidence>
<evidence type="ECO:0000256" key="7">
    <source>
        <dbReference type="SAM" id="MobiDB-lite"/>
    </source>
</evidence>
<evidence type="ECO:0000303" key="8">
    <source>
    </source>
</evidence>
<evidence type="ECO:0000305" key="9"/>
<evidence type="ECO:0007744" key="10">
    <source>
    </source>
</evidence>